<keyword id="KW-0488">Methylation</keyword>
<keyword id="KW-1185">Reference proteome</keyword>
<keyword id="KW-0687">Ribonucleoprotein</keyword>
<keyword id="KW-0689">Ribosomal protein</keyword>
<keyword id="KW-0694">RNA-binding</keyword>
<keyword id="KW-0699">rRNA-binding</keyword>
<keyword id="KW-0820">tRNA-binding</keyword>
<dbReference type="EMBL" id="CP000448">
    <property type="protein sequence ID" value="ABI69629.1"/>
    <property type="molecule type" value="Genomic_DNA"/>
</dbReference>
<dbReference type="RefSeq" id="WP_011641713.1">
    <property type="nucleotide sequence ID" value="NC_008346.1"/>
</dbReference>
<dbReference type="SMR" id="Q0AUH5"/>
<dbReference type="STRING" id="335541.Swol_2338"/>
<dbReference type="KEGG" id="swo:Swol_2338"/>
<dbReference type="eggNOG" id="COG0048">
    <property type="taxonomic scope" value="Bacteria"/>
</dbReference>
<dbReference type="HOGENOM" id="CLU_104295_1_2_9"/>
<dbReference type="OrthoDB" id="9802366at2"/>
<dbReference type="Proteomes" id="UP000001968">
    <property type="component" value="Chromosome"/>
</dbReference>
<dbReference type="GO" id="GO:0015935">
    <property type="term" value="C:small ribosomal subunit"/>
    <property type="evidence" value="ECO:0007669"/>
    <property type="project" value="InterPro"/>
</dbReference>
<dbReference type="GO" id="GO:0019843">
    <property type="term" value="F:rRNA binding"/>
    <property type="evidence" value="ECO:0007669"/>
    <property type="project" value="UniProtKB-UniRule"/>
</dbReference>
<dbReference type="GO" id="GO:0003735">
    <property type="term" value="F:structural constituent of ribosome"/>
    <property type="evidence" value="ECO:0007669"/>
    <property type="project" value="InterPro"/>
</dbReference>
<dbReference type="GO" id="GO:0000049">
    <property type="term" value="F:tRNA binding"/>
    <property type="evidence" value="ECO:0007669"/>
    <property type="project" value="UniProtKB-UniRule"/>
</dbReference>
<dbReference type="GO" id="GO:0006412">
    <property type="term" value="P:translation"/>
    <property type="evidence" value="ECO:0007669"/>
    <property type="project" value="UniProtKB-UniRule"/>
</dbReference>
<dbReference type="CDD" id="cd03368">
    <property type="entry name" value="Ribosomal_S12"/>
    <property type="match status" value="1"/>
</dbReference>
<dbReference type="FunFam" id="2.40.50.140:FF:000001">
    <property type="entry name" value="30S ribosomal protein S12"/>
    <property type="match status" value="1"/>
</dbReference>
<dbReference type="Gene3D" id="2.40.50.140">
    <property type="entry name" value="Nucleic acid-binding proteins"/>
    <property type="match status" value="1"/>
</dbReference>
<dbReference type="HAMAP" id="MF_00403_B">
    <property type="entry name" value="Ribosomal_uS12_B"/>
    <property type="match status" value="1"/>
</dbReference>
<dbReference type="InterPro" id="IPR012340">
    <property type="entry name" value="NA-bd_OB-fold"/>
</dbReference>
<dbReference type="InterPro" id="IPR006032">
    <property type="entry name" value="Ribosomal_uS12"/>
</dbReference>
<dbReference type="InterPro" id="IPR005679">
    <property type="entry name" value="Ribosomal_uS12_bac"/>
</dbReference>
<dbReference type="NCBIfam" id="TIGR00981">
    <property type="entry name" value="rpsL_bact"/>
    <property type="match status" value="1"/>
</dbReference>
<dbReference type="PANTHER" id="PTHR11652">
    <property type="entry name" value="30S RIBOSOMAL PROTEIN S12 FAMILY MEMBER"/>
    <property type="match status" value="1"/>
</dbReference>
<dbReference type="Pfam" id="PF00164">
    <property type="entry name" value="Ribosom_S12_S23"/>
    <property type="match status" value="1"/>
</dbReference>
<dbReference type="PIRSF" id="PIRSF002133">
    <property type="entry name" value="Ribosomal_S12/S23"/>
    <property type="match status" value="1"/>
</dbReference>
<dbReference type="PRINTS" id="PR01034">
    <property type="entry name" value="RIBOSOMALS12"/>
</dbReference>
<dbReference type="SUPFAM" id="SSF50249">
    <property type="entry name" value="Nucleic acid-binding proteins"/>
    <property type="match status" value="1"/>
</dbReference>
<dbReference type="PROSITE" id="PS00055">
    <property type="entry name" value="RIBOSOMAL_S12"/>
    <property type="match status" value="1"/>
</dbReference>
<accession>Q0AUH5</accession>
<gene>
    <name evidence="2" type="primary">rpsL</name>
    <name type="ordered locus">Swol_2338</name>
</gene>
<sequence>MPTINQLVRKGREKGEQKSTAPALKSCPQKRGVCTRVYTTTPKKPNSALRKIARVRLTNGIEVTAYIPGIGHNLQEHSVVLIRGGRVKDLPGVRYHIIRGTLDASGVQKRNQGRSKYGTKRPKKK</sequence>
<protein>
    <recommendedName>
        <fullName evidence="2">Small ribosomal subunit protein uS12</fullName>
    </recommendedName>
    <alternativeName>
        <fullName evidence="4">30S ribosomal protein S12</fullName>
    </alternativeName>
</protein>
<comment type="function">
    <text evidence="2">With S4 and S5 plays an important role in translational accuracy.</text>
</comment>
<comment type="function">
    <text evidence="2">Interacts with and stabilizes bases of the 16S rRNA that are involved in tRNA selection in the A site and with the mRNA backbone. Located at the interface of the 30S and 50S subunits, it traverses the body of the 30S subunit contacting proteins on the other side and probably holding the rRNA structure together. The combined cluster of proteins S8, S12 and S17 appears to hold together the shoulder and platform of the 30S subunit.</text>
</comment>
<comment type="subunit">
    <text evidence="2">Part of the 30S ribosomal subunit. Contacts proteins S8 and S17. May interact with IF1 in the 30S initiation complex.</text>
</comment>
<comment type="similarity">
    <text evidence="2">Belongs to the universal ribosomal protein uS12 family.</text>
</comment>
<organism>
    <name type="scientific">Syntrophomonas wolfei subsp. wolfei (strain DSM 2245B / Goettingen)</name>
    <dbReference type="NCBI Taxonomy" id="335541"/>
    <lineage>
        <taxon>Bacteria</taxon>
        <taxon>Bacillati</taxon>
        <taxon>Bacillota</taxon>
        <taxon>Clostridia</taxon>
        <taxon>Eubacteriales</taxon>
        <taxon>Syntrophomonadaceae</taxon>
        <taxon>Syntrophomonas</taxon>
    </lineage>
</organism>
<name>RS12_SYNWW</name>
<proteinExistence type="inferred from homology"/>
<feature type="chain" id="PRO_0000263600" description="Small ribosomal subunit protein uS12">
    <location>
        <begin position="1"/>
        <end position="125"/>
    </location>
</feature>
<feature type="region of interest" description="Disordered" evidence="3">
    <location>
        <begin position="1"/>
        <end position="27"/>
    </location>
</feature>
<feature type="region of interest" description="Disordered" evidence="3">
    <location>
        <begin position="103"/>
        <end position="125"/>
    </location>
</feature>
<feature type="compositionally biased region" description="Basic residues" evidence="3">
    <location>
        <begin position="111"/>
        <end position="125"/>
    </location>
</feature>
<feature type="modified residue" description="3-methylthioaspartic acid" evidence="1">
    <location>
        <position position="89"/>
    </location>
</feature>
<reference key="1">
    <citation type="journal article" date="2010" name="Environ. Microbiol.">
        <title>The genome of Syntrophomonas wolfei: new insights into syntrophic metabolism and biohydrogen production.</title>
        <authorList>
            <person name="Sieber J.R."/>
            <person name="Sims D.R."/>
            <person name="Han C."/>
            <person name="Kim E."/>
            <person name="Lykidis A."/>
            <person name="Lapidus A.L."/>
            <person name="McDonnald E."/>
            <person name="Rohlin L."/>
            <person name="Culley D.E."/>
            <person name="Gunsalus R."/>
            <person name="McInerney M.J."/>
        </authorList>
    </citation>
    <scope>NUCLEOTIDE SEQUENCE [LARGE SCALE GENOMIC DNA]</scope>
    <source>
        <strain>DSM 2245B / Goettingen</strain>
    </source>
</reference>
<evidence type="ECO:0000250" key="1"/>
<evidence type="ECO:0000255" key="2">
    <source>
        <dbReference type="HAMAP-Rule" id="MF_00403"/>
    </source>
</evidence>
<evidence type="ECO:0000256" key="3">
    <source>
        <dbReference type="SAM" id="MobiDB-lite"/>
    </source>
</evidence>
<evidence type="ECO:0000305" key="4"/>